<feature type="chain" id="PRO_0000215470" description="Poly(3-hydroxyalkanoate) polymerase subunit PhaC">
    <location>
        <begin position="1"/>
        <end position="355"/>
    </location>
</feature>
<feature type="domain" description="AB hydrolase-1" evidence="1">
    <location>
        <begin position="69"/>
        <end position="334"/>
    </location>
</feature>
<feature type="active site" evidence="1 3">
    <location>
        <position position="149"/>
    </location>
</feature>
<feature type="mutagenesis site" description="400-fold decrease in PHA synthase activity." evidence="3">
    <original>C</original>
    <variation>A</variation>
    <location>
        <position position="130"/>
    </location>
</feature>
<feature type="mutagenesis site" description="No PHA synthase activity." evidence="3">
    <original>C</original>
    <variation>A</variation>
    <location>
        <position position="149"/>
    </location>
</feature>
<feature type="mutagenesis site" description="No effect." evidence="3">
    <original>C</original>
    <variation>A</variation>
    <location>
        <position position="292"/>
    </location>
</feature>
<feature type="sequence conflict" description="In Ref. 1; AAA23320." evidence="6" ref="1">
    <original>A</original>
    <variation>G</variation>
    <location>
        <position position="113"/>
    </location>
</feature>
<reference key="1">
    <citation type="journal article" date="1992" name="Eur. J. Biochem.">
        <title>Cloning and nucleotide sequences of genes relevant for biosynthesis of poly(3-hydroxybutyric acid) in Chromatium vinosum strain D.</title>
        <authorList>
            <person name="Liebergesell M."/>
            <person name="Steinbuechel A."/>
        </authorList>
    </citation>
    <scope>NUCLEOTIDE SEQUENCE [GENOMIC DNA]</scope>
    <source>
        <strain>ATCC 17899 / DSM 180 / NBRC 103801 / NCIMB 10441 / D</strain>
    </source>
</reference>
<reference key="2">
    <citation type="journal article" date="2011" name="Stand. Genomic Sci.">
        <title>Complete genome sequence of Allochromatium vinosum DSM 180(T).</title>
        <authorList>
            <person name="Weissgerber T."/>
            <person name="Zigann R."/>
            <person name="Bruce D."/>
            <person name="Chang Y.J."/>
            <person name="Detter J.C."/>
            <person name="Han C."/>
            <person name="Hauser L."/>
            <person name="Jeffries C.D."/>
            <person name="Land M."/>
            <person name="Munk A.C."/>
            <person name="Tapia R."/>
            <person name="Dahl C."/>
        </authorList>
    </citation>
    <scope>NUCLEOTIDE SEQUENCE [LARGE SCALE GENOMIC DNA]</scope>
    <source>
        <strain>ATCC 17899 / DSM 180 / NBRC 103801 / NCIMB 10441 / D</strain>
    </source>
</reference>
<reference key="3">
    <citation type="journal article" date="1992" name="FEMS Microbiol. Rev.">
        <title>Molecular basis for biosynthesis and accumulation of polyhydroxyalkanoic acids in bacteria.</title>
        <authorList>
            <person name="Steinbuechel A."/>
            <person name="Hustede E."/>
            <person name="Liebergesell M."/>
            <person name="Pieper U."/>
            <person name="Timm A."/>
            <person name="Valentin H."/>
        </authorList>
    </citation>
    <scope>GENE NAME</scope>
</reference>
<reference key="4">
    <citation type="journal article" date="1994" name="Eur. J. Biochem.">
        <title>Purification and characterization of the poly(hydroxyalkanoic acid) synthase from Chromatium vinosum and localization of the enzyme at the surface of poly(hydroxyalkanoic acid) granules.</title>
        <authorList>
            <person name="Liebergesell M."/>
            <person name="Sonomoto K."/>
            <person name="Madkour M."/>
            <person name="Mayer F."/>
            <person name="Steinbuechel A."/>
        </authorList>
    </citation>
    <scope>FUNCTION</scope>
    <scope>CATALYTIC ACTIVITY</scope>
    <scope>BIOPHYSICOCHEMICAL PROPERTIES</scope>
    <scope>SUBUNIT</scope>
    <scope>SUBCELLULAR LOCATION</scope>
    <source>
        <strain>ATCC 17899 / DSM 180 / NBRC 103801 / NCIMB 10441 / D</strain>
    </source>
</reference>
<reference key="5">
    <citation type="journal article" date="1999" name="Biochemistry">
        <title>PHA synthase from Chromatium vinosum: cysteine 149 is involved in covalent catalysis.</title>
        <authorList>
            <person name="Mueh U."/>
            <person name="Sinskey A.J."/>
            <person name="Kirby D.P."/>
            <person name="Lane W.S."/>
            <person name="Stubbe J."/>
        </authorList>
    </citation>
    <scope>FUNCTION</scope>
    <scope>ACTIVE SITE</scope>
    <scope>CATALYTIC ACTIVITY</scope>
    <scope>SUBUNIT</scope>
    <scope>MUTAGENESIS OF CYS-130; CYS-149 AND CYS-292</scope>
</reference>
<gene>
    <name evidence="5" type="primary">phaC</name>
    <name evidence="4" type="synonym">phbC</name>
    <name type="ordered locus">Alvin_0061</name>
</gene>
<keyword id="KW-0012">Acyltransferase</keyword>
<keyword id="KW-0963">Cytoplasm</keyword>
<keyword id="KW-0583">PHB biosynthesis</keyword>
<keyword id="KW-1185">Reference proteome</keyword>
<keyword id="KW-0808">Transferase</keyword>
<sequence>MFPIDIRPDKLTQEMLDYSRKLGQGMENLLNAEAIDTGVSPKQAVYSEDKLVLYRYDRPEGAPEAQPVPLLIVYALVNRPYMTDIQEDRSTIKGLLATGQDVYLIDWGYPDQADRALTLDDYINGYIDRCVDYLREAHGVDKVNLLGICQGGAFSLMYSALHPDKVRNLVTMVTPVDFKTPDNLLSAWVQNVDIDLAVDTMGNIPGELLNWTFLSLKPFSLTGQKYVNMVDLLDDPDKVKNFLRMEKWIFDSPDQAGETFRQFIKDFYQNNGFLNGGVVLGGQEVDLKDITCPVLNIFALQDHLVPPDASRALKGLTSSPDYTELAFPGGHIGIYVSGKAQKEVTPAIGKWLNER</sequence>
<accession>P45370</accession>
<accession>D3RUY4</accession>
<proteinExistence type="evidence at protein level"/>
<protein>
    <recommendedName>
        <fullName>Poly(3-hydroxyalkanoate) polymerase subunit PhaC</fullName>
        <shortName>PHA polymerase</shortName>
        <ecNumber evidence="2">2.3.1.-</ecNumber>
    </recommendedName>
    <alternativeName>
        <fullName>PHB synthase subunit PhaC</fullName>
    </alternativeName>
    <alternativeName>
        <fullName evidence="5">Poly(hydroxyalkanoic acid) synthase subunit PhaC</fullName>
        <shortName evidence="5">PHA synthase subunit PhaC</shortName>
        <shortName evidence="5">Polyhydroxyalkanoic acid synthase</shortName>
    </alternativeName>
    <alternativeName>
        <fullName evidence="5">Poly-beta-hydroxybutyrate polymerase</fullName>
        <shortName>PHB polymerase</shortName>
        <shortName>Poly(3-hydroxybutyrate) polymerase</shortName>
    </alternativeName>
</protein>
<dbReference type="EC" id="2.3.1.-" evidence="2"/>
<dbReference type="EMBL" id="L01112">
    <property type="protein sequence ID" value="AAA23320.1"/>
    <property type="molecule type" value="Genomic_DNA"/>
</dbReference>
<dbReference type="EMBL" id="CP001896">
    <property type="protein sequence ID" value="ADC61033.1"/>
    <property type="molecule type" value="Genomic_DNA"/>
</dbReference>
<dbReference type="PIR" id="S29274">
    <property type="entry name" value="S29274"/>
</dbReference>
<dbReference type="RefSeq" id="WP_012969309.1">
    <property type="nucleotide sequence ID" value="NC_013851.1"/>
</dbReference>
<dbReference type="SMR" id="P45370"/>
<dbReference type="STRING" id="572477.Alvin_0061"/>
<dbReference type="ESTHER" id="chrvi-phbc">
    <property type="family name" value="PHA_synth_III_C"/>
</dbReference>
<dbReference type="KEGG" id="alv:Alvin_0061"/>
<dbReference type="eggNOG" id="COG3243">
    <property type="taxonomic scope" value="Bacteria"/>
</dbReference>
<dbReference type="HOGENOM" id="CLU_035017_0_0_6"/>
<dbReference type="OrthoDB" id="9767934at2"/>
<dbReference type="BRENDA" id="2.3.1.304">
    <property type="organism ID" value="257"/>
</dbReference>
<dbReference type="UniPathway" id="UPA00917"/>
<dbReference type="Proteomes" id="UP000001441">
    <property type="component" value="Chromosome"/>
</dbReference>
<dbReference type="GO" id="GO:0070088">
    <property type="term" value="C:polyhydroxyalkanoate granule"/>
    <property type="evidence" value="ECO:0000314"/>
    <property type="project" value="UniProtKB"/>
</dbReference>
<dbReference type="GO" id="GO:0016746">
    <property type="term" value="F:acyltransferase activity"/>
    <property type="evidence" value="ECO:0007669"/>
    <property type="project" value="UniProtKB-KW"/>
</dbReference>
<dbReference type="GO" id="GO:0042619">
    <property type="term" value="P:poly-hydroxybutyrate biosynthetic process"/>
    <property type="evidence" value="ECO:0000314"/>
    <property type="project" value="UniProtKB"/>
</dbReference>
<dbReference type="FunFam" id="3.40.50.1820:FF:000112">
    <property type="entry name" value="Poly(R)-hydroxyalkanoic acid synthase, class III, PhaC subunit"/>
    <property type="match status" value="1"/>
</dbReference>
<dbReference type="Gene3D" id="3.40.50.1820">
    <property type="entry name" value="alpha/beta hydrolase"/>
    <property type="match status" value="1"/>
</dbReference>
<dbReference type="InterPro" id="IPR000073">
    <property type="entry name" value="AB_hydrolase_1"/>
</dbReference>
<dbReference type="InterPro" id="IPR029058">
    <property type="entry name" value="AB_hydrolase_fold"/>
</dbReference>
<dbReference type="InterPro" id="IPR051321">
    <property type="entry name" value="PHA/PHB_synthase"/>
</dbReference>
<dbReference type="InterPro" id="IPR010125">
    <property type="entry name" value="PHA_synth_III_C"/>
</dbReference>
<dbReference type="NCBIfam" id="TIGR01836">
    <property type="entry name" value="PHA_synth_III_C"/>
    <property type="match status" value="1"/>
</dbReference>
<dbReference type="PANTHER" id="PTHR36837">
    <property type="entry name" value="POLY(3-HYDROXYALKANOATE) POLYMERASE SUBUNIT PHAC"/>
    <property type="match status" value="1"/>
</dbReference>
<dbReference type="PANTHER" id="PTHR36837:SF2">
    <property type="entry name" value="POLY(3-HYDROXYALKANOATE) POLYMERASE SUBUNIT PHAC"/>
    <property type="match status" value="1"/>
</dbReference>
<dbReference type="Pfam" id="PF00561">
    <property type="entry name" value="Abhydrolase_1"/>
    <property type="match status" value="1"/>
</dbReference>
<dbReference type="SUPFAM" id="SSF53474">
    <property type="entry name" value="alpha/beta-Hydrolases"/>
    <property type="match status" value="1"/>
</dbReference>
<comment type="function">
    <text evidence="2 3">Polymerizes D(-)-3-hydroxybutyryl-CoA to create polyhydroxybutyrate (PHB) which consists of thousands of hydroxybutyrate molecules linked end to end (PubMed:7957260). This subunit has catalytic activity that is enhanced 100-fold by PhaE, the non-catalytic subunit (PubMed:9888824).</text>
</comment>
<comment type="catalytic activity">
    <reaction evidence="2 3">
        <text>(3R)-3-hydroxybutanoyl-CoA + [(3R)-hydroxybutanoate](n) = [(3R)-hydroxybutanoate](n+1) + CoA</text>
        <dbReference type="Rhea" id="RHEA:15405"/>
        <dbReference type="Rhea" id="RHEA-COMP:14464"/>
        <dbReference type="Rhea" id="RHEA-COMP:14465"/>
        <dbReference type="ChEBI" id="CHEBI:8298"/>
        <dbReference type="ChEBI" id="CHEBI:57287"/>
        <dbReference type="ChEBI" id="CHEBI:57315"/>
    </reaction>
</comment>
<comment type="biophysicochemical properties">
    <kinetics>
        <KM evidence="2">0.063 mM for D(-)-3-hydroxybutyryl-CoA</KM>
        <text evidence="2">Measured with the heterodimeric enzyme (PubMed:7957260). There are at least 2 substrate binding sites which display positive cooperativity (PubMed:7957260).</text>
    </kinetics>
    <phDependence>
        <text evidence="2">Optimum pH is 7.8.</text>
    </phDependence>
</comment>
<comment type="pathway">
    <text>Biopolymer metabolism; poly-(R)-3-hydroxybutanoate biosynthesis.</text>
</comment>
<comment type="subunit">
    <text evidence="2 3">A large complex of PhaC and PhaE; the ratio of the subunits has been estimated to be from 1:1 to 4:1, with more PhaE than PhaC (PubMed:7957260, PubMed:9888824).</text>
</comment>
<comment type="subcellular location">
    <subcellularLocation>
        <location evidence="6">Cytoplasm</location>
    </subcellularLocation>
    <text evidence="2">Associates with the exterior of poly(3-hydroxybutyric acid) granules (PHB) when grown under 'storage' conditions.</text>
</comment>
<comment type="miscellaneous">
    <text evidence="6">Poly(3-hydroxyalkanoic acids) (PHA), of which PHB is among the most common compounds, has potential uses as a renewable, biodegradable thermoplastic. PHB serves as an intracellular energy reserve material when cells grow under conditions of nutrient limitation.</text>
</comment>
<comment type="similarity">
    <text evidence="6">Belongs to the PHA/PHB synthase family. Type III PhaC subfamily.</text>
</comment>
<organism>
    <name type="scientific">Allochromatium vinosum (strain ATCC 17899 / DSM 180 / NBRC 103801 / NCIMB 10441 / D)</name>
    <name type="common">Chromatium vinosum</name>
    <dbReference type="NCBI Taxonomy" id="572477"/>
    <lineage>
        <taxon>Bacteria</taxon>
        <taxon>Pseudomonadati</taxon>
        <taxon>Pseudomonadota</taxon>
        <taxon>Gammaproteobacteria</taxon>
        <taxon>Chromatiales</taxon>
        <taxon>Chromatiaceae</taxon>
        <taxon>Allochromatium</taxon>
    </lineage>
</organism>
<name>PHAC_ALLVD</name>
<evidence type="ECO:0000255" key="1"/>
<evidence type="ECO:0000269" key="2">
    <source>
    </source>
</evidence>
<evidence type="ECO:0000269" key="3">
    <source>
    </source>
</evidence>
<evidence type="ECO:0000303" key="4">
    <source>
    </source>
</evidence>
<evidence type="ECO:0000303" key="5">
    <source>
    </source>
</evidence>
<evidence type="ECO:0000305" key="6"/>